<gene>
    <name type="primary">NFI</name>
</gene>
<proteinExistence type="evidence at protein level"/>
<evidence type="ECO:0000255" key="1">
    <source>
        <dbReference type="PROSITE-ProRule" id="PRU00436"/>
    </source>
</evidence>
<evidence type="ECO:0000256" key="2">
    <source>
        <dbReference type="SAM" id="MobiDB-lite"/>
    </source>
</evidence>
<name>NFIL_PIG</name>
<reference key="1">
    <citation type="journal article" date="1988" name="FEBS Lett.">
        <title>Isolation and characterization of the porcine nuclear factor I (NFI) gene.</title>
        <authorList>
            <person name="Meisterernst M."/>
            <person name="Rogge L."/>
            <person name="Donath C."/>
            <person name="Gander I."/>
            <person name="Lottspeich F."/>
            <person name="Mertz R."/>
            <person name="Dobner T."/>
            <person name="Foeckler R."/>
            <person name="Stelzer G."/>
            <person name="Winnacker E.L."/>
        </authorList>
    </citation>
    <scope>NUCLEOTIDE SEQUENCE [GENOMIC DNA]</scope>
</reference>
<reference key="2">
    <citation type="journal article" date="1988" name="Biochim. Biophys. Acta">
        <title>Purification methods for the sequence-specific DNA-binding protein nuclear factor I (NFI) -- generation of protein sequence information.</title>
        <authorList>
            <person name="Gander I."/>
            <person name="Foeckler R."/>
            <person name="Rogge L."/>
            <person name="Meisterernst M."/>
            <person name="Schneider R."/>
            <person name="Mertz R."/>
            <person name="Lottspeich F."/>
            <person name="Winnacker E.L."/>
        </authorList>
    </citation>
    <scope>PARTIAL PROTEIN SEQUENCE</scope>
    <source>
        <tissue>Liver</tissue>
    </source>
</reference>
<dbReference type="EMBL" id="X12764">
    <property type="protein sequence ID" value="CAA31254.1"/>
    <property type="molecule type" value="Genomic_DNA"/>
</dbReference>
<dbReference type="PIR" id="JT0463">
    <property type="entry name" value="JT0463"/>
</dbReference>
<dbReference type="SMR" id="P14057"/>
<dbReference type="PeptideAtlas" id="P14057"/>
<dbReference type="InParanoid" id="P14057"/>
<dbReference type="Proteomes" id="UP000008227">
    <property type="component" value="Unplaced"/>
</dbReference>
<dbReference type="Proteomes" id="UP000314985">
    <property type="component" value="Unplaced"/>
</dbReference>
<dbReference type="Proteomes" id="UP000694570">
    <property type="component" value="Unplaced"/>
</dbReference>
<dbReference type="Proteomes" id="UP000694571">
    <property type="component" value="Unplaced"/>
</dbReference>
<dbReference type="Proteomes" id="UP000694720">
    <property type="component" value="Unplaced"/>
</dbReference>
<dbReference type="Proteomes" id="UP000694722">
    <property type="component" value="Unplaced"/>
</dbReference>
<dbReference type="Proteomes" id="UP000694723">
    <property type="component" value="Unplaced"/>
</dbReference>
<dbReference type="Proteomes" id="UP000694724">
    <property type="component" value="Unplaced"/>
</dbReference>
<dbReference type="Proteomes" id="UP000694725">
    <property type="component" value="Unplaced"/>
</dbReference>
<dbReference type="Proteomes" id="UP000694726">
    <property type="component" value="Unplaced"/>
</dbReference>
<dbReference type="Proteomes" id="UP000694727">
    <property type="component" value="Unplaced"/>
</dbReference>
<dbReference type="Proteomes" id="UP000694728">
    <property type="component" value="Unplaced"/>
</dbReference>
<dbReference type="GO" id="GO:0005634">
    <property type="term" value="C:nucleus"/>
    <property type="evidence" value="ECO:0000318"/>
    <property type="project" value="GO_Central"/>
</dbReference>
<dbReference type="GO" id="GO:0000981">
    <property type="term" value="F:DNA-binding transcription factor activity, RNA polymerase II-specific"/>
    <property type="evidence" value="ECO:0000318"/>
    <property type="project" value="GO_Central"/>
</dbReference>
<dbReference type="GO" id="GO:0000978">
    <property type="term" value="F:RNA polymerase II cis-regulatory region sequence-specific DNA binding"/>
    <property type="evidence" value="ECO:0000318"/>
    <property type="project" value="GO_Central"/>
</dbReference>
<dbReference type="GO" id="GO:0006260">
    <property type="term" value="P:DNA replication"/>
    <property type="evidence" value="ECO:0007669"/>
    <property type="project" value="UniProtKB-KW"/>
</dbReference>
<dbReference type="GO" id="GO:0045893">
    <property type="term" value="P:positive regulation of DNA-templated transcription"/>
    <property type="evidence" value="ECO:0007669"/>
    <property type="project" value="UniProtKB-ARBA"/>
</dbReference>
<dbReference type="GO" id="GO:0006357">
    <property type="term" value="P:regulation of transcription by RNA polymerase II"/>
    <property type="evidence" value="ECO:0000318"/>
    <property type="project" value="GO_Central"/>
</dbReference>
<dbReference type="InterPro" id="IPR000647">
    <property type="entry name" value="CTF/NFI"/>
</dbReference>
<dbReference type="InterPro" id="IPR020604">
    <property type="entry name" value="CTF/NFI_DNA-bd-dom"/>
</dbReference>
<dbReference type="InterPro" id="IPR019739">
    <property type="entry name" value="CTF/NFI_DNA-bd_CS"/>
</dbReference>
<dbReference type="InterPro" id="IPR019548">
    <property type="entry name" value="CTF/NFI_DNA-bd_N"/>
</dbReference>
<dbReference type="InterPro" id="IPR003619">
    <property type="entry name" value="MAD_homology1_Dwarfin-type"/>
</dbReference>
<dbReference type="PANTHER" id="PTHR11492:SF2">
    <property type="entry name" value="NUCLEAR FACTOR 1 C-TYPE"/>
    <property type="match status" value="1"/>
</dbReference>
<dbReference type="PANTHER" id="PTHR11492">
    <property type="entry name" value="NUCLEAR FACTOR I"/>
    <property type="match status" value="1"/>
</dbReference>
<dbReference type="Pfam" id="PF03165">
    <property type="entry name" value="MH1"/>
    <property type="match status" value="1"/>
</dbReference>
<dbReference type="Pfam" id="PF10524">
    <property type="entry name" value="NfI_DNAbd_pre-N"/>
    <property type="match status" value="1"/>
</dbReference>
<dbReference type="SMART" id="SM00523">
    <property type="entry name" value="DWA"/>
    <property type="match status" value="1"/>
</dbReference>
<dbReference type="PROSITE" id="PS00349">
    <property type="entry name" value="CTF_NFI_1"/>
    <property type="match status" value="1"/>
</dbReference>
<dbReference type="PROSITE" id="PS51080">
    <property type="entry name" value="CTF_NFI_2"/>
    <property type="match status" value="1"/>
</dbReference>
<comment type="function">
    <text>Recognizes and binds the palindromic sequence 5'-TTGGCNNNNNGCCAA-3' present in viral and cellular promoters and in the origin of replication of adenovirus type 2. These proteins are individually capable of activating transcription and replication.</text>
</comment>
<comment type="subunit">
    <text>Binds DNA as a homodimer.</text>
</comment>
<comment type="subcellular location">
    <subcellularLocation>
        <location>Nucleus</location>
    </subcellularLocation>
</comment>
<comment type="alternative products">
    <event type="alternative splicing"/>
    <isoform>
        <id>P14057-1</id>
        <name>1</name>
        <sequence type="displayed"/>
    </isoform>
    <text>A number of isoforms are produced.</text>
</comment>
<comment type="similarity">
    <text evidence="1">Belongs to the CTF/NF-I family.</text>
</comment>
<organism>
    <name type="scientific">Sus scrofa</name>
    <name type="common">Pig</name>
    <dbReference type="NCBI Taxonomy" id="9823"/>
    <lineage>
        <taxon>Eukaryota</taxon>
        <taxon>Metazoa</taxon>
        <taxon>Chordata</taxon>
        <taxon>Craniata</taxon>
        <taxon>Vertebrata</taxon>
        <taxon>Euteleostomi</taxon>
        <taxon>Mammalia</taxon>
        <taxon>Eutheria</taxon>
        <taxon>Laurasiatheria</taxon>
        <taxon>Artiodactyla</taxon>
        <taxon>Suina</taxon>
        <taxon>Suidae</taxon>
        <taxon>Sus</taxon>
    </lineage>
</organism>
<accession>P14057</accession>
<keyword id="KW-0010">Activator</keyword>
<keyword id="KW-0025">Alternative splicing</keyword>
<keyword id="KW-0903">Direct protein sequencing</keyword>
<keyword id="KW-0235">DNA replication</keyword>
<keyword id="KW-0238">DNA-binding</keyword>
<keyword id="KW-0539">Nucleus</keyword>
<keyword id="KW-1185">Reference proteome</keyword>
<keyword id="KW-0804">Transcription</keyword>
<keyword id="KW-0805">Transcription regulation</keyword>
<protein>
    <recommendedName>
        <fullName>Nuclear factor 1</fullName>
    </recommendedName>
    <alternativeName>
        <fullName>CCAAT-box-binding transcription factor</fullName>
        <shortName>CTF</shortName>
    </alternativeName>
    <alternativeName>
        <fullName>Nuclear factor I</fullName>
        <shortName>NF-I</shortName>
    </alternativeName>
    <alternativeName>
        <fullName>TGGCA-binding protein</fullName>
    </alternativeName>
</protein>
<sequence>MGSRLTQDEFHPFIEALLPHVRAFAYTWFNLQARKRKYFKKHEKRMSKDEERAVKDELLGEKAEVKQKWASRLLAKLRKDIRPECREDFVLAITGKKAPGCVLSNPDQKGKMRRIDCLRQADKVWRLDLVMVILFKGIPLESTDGERLVKAAQCGHPVLCVQPHHIGVAVKELDLYLAYFVRERGEAGRARGRGSDGREGMRRASQSGRPGESGPAGLRDQAGTRSLGWAG</sequence>
<feature type="chain" id="PRO_0000100207" description="Nuclear factor 1">
    <location>
        <begin position="1"/>
        <end position="231" status="greater than"/>
    </location>
</feature>
<feature type="DNA-binding region" description="CTF/NF-I" evidence="1">
    <location>
        <begin position="1"/>
        <end position="192"/>
    </location>
</feature>
<feature type="region of interest" description="Disordered" evidence="2">
    <location>
        <begin position="188"/>
        <end position="231"/>
    </location>
</feature>
<feature type="compositionally biased region" description="Basic and acidic residues" evidence="2">
    <location>
        <begin position="188"/>
        <end position="202"/>
    </location>
</feature>
<feature type="non-terminal residue">
    <location>
        <position position="231"/>
    </location>
</feature>